<proteinExistence type="inferred from homology"/>
<protein>
    <recommendedName>
        <fullName evidence="1">3-deoxy-manno-octulosonate cytidylyltransferase</fullName>
        <ecNumber evidence="1">2.7.7.38</ecNumber>
    </recommendedName>
    <alternativeName>
        <fullName evidence="1">CMP-2-keto-3-deoxyoctulosonic acid synthase</fullName>
        <shortName evidence="1">CKS</shortName>
        <shortName evidence="1">CMP-KDO synthase</shortName>
    </alternativeName>
</protein>
<sequence length="250" mass="28022">MNFTVIIPARYASSRLPRKPLLDIAGKPMIQHVWEKAQQAGATRVIIATDHPEIEATAKAFGAEVCMTSDQHNSGTERLAEVIEKMQIADNEIIVNVQGDEPLIPPVIVSQVAENLDRCQVNMATLAVKLTTKEELFNPNAVKALADKNGMALYFSRAPIPFARDHFADCDDAFVASQNYLRHIGIYAYRAGFVKQYVAWQPTQLEQLESLEQLRALWYGEKIHIELAKQAPQVGVDTQEDLERVRRILA</sequence>
<comment type="function">
    <text evidence="1">Activates KDO (a required 8-carbon sugar) for incorporation into bacterial lipopolysaccharide in Gram-negative bacteria.</text>
</comment>
<comment type="catalytic activity">
    <reaction evidence="1">
        <text>3-deoxy-alpha-D-manno-oct-2-ulosonate + CTP = CMP-3-deoxy-beta-D-manno-octulosonate + diphosphate</text>
        <dbReference type="Rhea" id="RHEA:23448"/>
        <dbReference type="ChEBI" id="CHEBI:33019"/>
        <dbReference type="ChEBI" id="CHEBI:37563"/>
        <dbReference type="ChEBI" id="CHEBI:85986"/>
        <dbReference type="ChEBI" id="CHEBI:85987"/>
        <dbReference type="EC" id="2.7.7.38"/>
    </reaction>
</comment>
<comment type="pathway">
    <text evidence="1">Nucleotide-sugar biosynthesis; CMP-3-deoxy-D-manno-octulosonate biosynthesis; CMP-3-deoxy-D-manno-octulosonate from 3-deoxy-D-manno-octulosonate and CTP: step 1/1.</text>
</comment>
<comment type="pathway">
    <text evidence="1">Bacterial outer membrane biogenesis; lipopolysaccharide biosynthesis.</text>
</comment>
<comment type="subcellular location">
    <subcellularLocation>
        <location evidence="1">Cytoplasm</location>
    </subcellularLocation>
</comment>
<comment type="similarity">
    <text evidence="1">Belongs to the KdsB family.</text>
</comment>
<evidence type="ECO:0000255" key="1">
    <source>
        <dbReference type="HAMAP-Rule" id="MF_00057"/>
    </source>
</evidence>
<accession>B3GZS5</accession>
<gene>
    <name evidence="1" type="primary">kdsB</name>
    <name type="ordered locus">APP7_0085</name>
</gene>
<reference key="1">
    <citation type="submission" date="2008-06" db="EMBL/GenBank/DDBJ databases">
        <title>Genome and proteome analysis of A. pleuropneumoniae serotype 7.</title>
        <authorList>
            <person name="Linke B."/>
            <person name="Buettner F."/>
            <person name="Martinez-Arias R."/>
            <person name="Goesmann A."/>
            <person name="Baltes N."/>
            <person name="Tegetmeyer H."/>
            <person name="Singh M."/>
            <person name="Gerlach G.F."/>
        </authorList>
    </citation>
    <scope>NUCLEOTIDE SEQUENCE [LARGE SCALE GENOMIC DNA]</scope>
    <source>
        <strain>AP76</strain>
    </source>
</reference>
<dbReference type="EC" id="2.7.7.38" evidence="1"/>
<dbReference type="EMBL" id="CP001091">
    <property type="protein sequence ID" value="ACE60737.1"/>
    <property type="molecule type" value="Genomic_DNA"/>
</dbReference>
<dbReference type="RefSeq" id="WP_005618701.1">
    <property type="nucleotide sequence ID" value="NC_010939.1"/>
</dbReference>
<dbReference type="SMR" id="B3GZS5"/>
<dbReference type="KEGG" id="apa:APP7_0085"/>
<dbReference type="HOGENOM" id="CLU_065038_1_0_6"/>
<dbReference type="UniPathway" id="UPA00030"/>
<dbReference type="UniPathway" id="UPA00358">
    <property type="reaction ID" value="UER00476"/>
</dbReference>
<dbReference type="Proteomes" id="UP000001226">
    <property type="component" value="Chromosome"/>
</dbReference>
<dbReference type="GO" id="GO:0005829">
    <property type="term" value="C:cytosol"/>
    <property type="evidence" value="ECO:0007669"/>
    <property type="project" value="TreeGrafter"/>
</dbReference>
<dbReference type="GO" id="GO:0008690">
    <property type="term" value="F:3-deoxy-manno-octulosonate cytidylyltransferase activity"/>
    <property type="evidence" value="ECO:0007669"/>
    <property type="project" value="UniProtKB-UniRule"/>
</dbReference>
<dbReference type="GO" id="GO:0033468">
    <property type="term" value="P:CMP-keto-3-deoxy-D-manno-octulosonic acid biosynthetic process"/>
    <property type="evidence" value="ECO:0007669"/>
    <property type="project" value="UniProtKB-UniRule"/>
</dbReference>
<dbReference type="GO" id="GO:0009103">
    <property type="term" value="P:lipopolysaccharide biosynthetic process"/>
    <property type="evidence" value="ECO:0007669"/>
    <property type="project" value="UniProtKB-UniRule"/>
</dbReference>
<dbReference type="CDD" id="cd02517">
    <property type="entry name" value="CMP-KDO-Synthetase"/>
    <property type="match status" value="1"/>
</dbReference>
<dbReference type="FunFam" id="3.90.550.10:FF:000011">
    <property type="entry name" value="3-deoxy-manno-octulosonate cytidylyltransferase"/>
    <property type="match status" value="1"/>
</dbReference>
<dbReference type="Gene3D" id="3.90.550.10">
    <property type="entry name" value="Spore Coat Polysaccharide Biosynthesis Protein SpsA, Chain A"/>
    <property type="match status" value="1"/>
</dbReference>
<dbReference type="HAMAP" id="MF_00057">
    <property type="entry name" value="KdsB"/>
    <property type="match status" value="1"/>
</dbReference>
<dbReference type="InterPro" id="IPR003329">
    <property type="entry name" value="Cytidylyl_trans"/>
</dbReference>
<dbReference type="InterPro" id="IPR004528">
    <property type="entry name" value="KdsB"/>
</dbReference>
<dbReference type="InterPro" id="IPR029044">
    <property type="entry name" value="Nucleotide-diphossugar_trans"/>
</dbReference>
<dbReference type="NCBIfam" id="TIGR00466">
    <property type="entry name" value="kdsB"/>
    <property type="match status" value="1"/>
</dbReference>
<dbReference type="NCBIfam" id="NF003950">
    <property type="entry name" value="PRK05450.1-3"/>
    <property type="match status" value="1"/>
</dbReference>
<dbReference type="NCBIfam" id="NF003952">
    <property type="entry name" value="PRK05450.1-5"/>
    <property type="match status" value="1"/>
</dbReference>
<dbReference type="NCBIfam" id="NF009905">
    <property type="entry name" value="PRK13368.1"/>
    <property type="match status" value="1"/>
</dbReference>
<dbReference type="PANTHER" id="PTHR42866">
    <property type="entry name" value="3-DEOXY-MANNO-OCTULOSONATE CYTIDYLYLTRANSFERASE"/>
    <property type="match status" value="1"/>
</dbReference>
<dbReference type="PANTHER" id="PTHR42866:SF2">
    <property type="entry name" value="3-DEOXY-MANNO-OCTULOSONATE CYTIDYLYLTRANSFERASE, MITOCHONDRIAL"/>
    <property type="match status" value="1"/>
</dbReference>
<dbReference type="Pfam" id="PF02348">
    <property type="entry name" value="CTP_transf_3"/>
    <property type="match status" value="1"/>
</dbReference>
<dbReference type="SUPFAM" id="SSF53448">
    <property type="entry name" value="Nucleotide-diphospho-sugar transferases"/>
    <property type="match status" value="1"/>
</dbReference>
<keyword id="KW-0963">Cytoplasm</keyword>
<keyword id="KW-0448">Lipopolysaccharide biosynthesis</keyword>
<keyword id="KW-0548">Nucleotidyltransferase</keyword>
<keyword id="KW-0808">Transferase</keyword>
<organism>
    <name type="scientific">Actinobacillus pleuropneumoniae serotype 7 (strain AP76)</name>
    <dbReference type="NCBI Taxonomy" id="537457"/>
    <lineage>
        <taxon>Bacteria</taxon>
        <taxon>Pseudomonadati</taxon>
        <taxon>Pseudomonadota</taxon>
        <taxon>Gammaproteobacteria</taxon>
        <taxon>Pasteurellales</taxon>
        <taxon>Pasteurellaceae</taxon>
        <taxon>Actinobacillus</taxon>
    </lineage>
</organism>
<feature type="chain" id="PRO_1000091851" description="3-deoxy-manno-octulosonate cytidylyltransferase">
    <location>
        <begin position="1"/>
        <end position="250"/>
    </location>
</feature>
<name>KDSB_ACTP7</name>